<feature type="chain" id="PRO_0000360715" description="Uncharacterized protein YdeM">
    <location>
        <begin position="1"/>
        <end position="141"/>
    </location>
</feature>
<feature type="domain" description="MaoC-like">
    <location>
        <begin position="8"/>
        <end position="112"/>
    </location>
</feature>
<organism>
    <name type="scientific">Bacillus subtilis (strain 168)</name>
    <dbReference type="NCBI Taxonomy" id="224308"/>
    <lineage>
        <taxon>Bacteria</taxon>
        <taxon>Bacillati</taxon>
        <taxon>Bacillota</taxon>
        <taxon>Bacilli</taxon>
        <taxon>Bacillales</taxon>
        <taxon>Bacillaceae</taxon>
        <taxon>Bacillus</taxon>
    </lineage>
</organism>
<proteinExistence type="predicted"/>
<gene>
    <name type="primary">ydeM</name>
    <name type="ordered locus">BSU05250</name>
</gene>
<dbReference type="EMBL" id="AB001488">
    <property type="protein sequence ID" value="BAA19360.1"/>
    <property type="molecule type" value="Genomic_DNA"/>
</dbReference>
<dbReference type="EMBL" id="AL009126">
    <property type="protein sequence ID" value="CAB12332.1"/>
    <property type="molecule type" value="Genomic_DNA"/>
</dbReference>
<dbReference type="PIR" id="G69778">
    <property type="entry name" value="G69778"/>
</dbReference>
<dbReference type="RefSeq" id="NP_388406.1">
    <property type="nucleotide sequence ID" value="NC_000964.3"/>
</dbReference>
<dbReference type="RefSeq" id="WP_003234221.1">
    <property type="nucleotide sequence ID" value="NZ_OZ025638.1"/>
</dbReference>
<dbReference type="SMR" id="P96670"/>
<dbReference type="FunCoup" id="P96670">
    <property type="interactions" value="17"/>
</dbReference>
<dbReference type="STRING" id="224308.BSU05250"/>
<dbReference type="PaxDb" id="224308-BSU05250"/>
<dbReference type="EnsemblBacteria" id="CAB12332">
    <property type="protein sequence ID" value="CAB12332"/>
    <property type="gene ID" value="BSU_05250"/>
</dbReference>
<dbReference type="GeneID" id="938104"/>
<dbReference type="KEGG" id="bsu:BSU05250"/>
<dbReference type="PATRIC" id="fig|224308.179.peg.560"/>
<dbReference type="eggNOG" id="COG2030">
    <property type="taxonomic scope" value="Bacteria"/>
</dbReference>
<dbReference type="InParanoid" id="P96670"/>
<dbReference type="OrthoDB" id="9801625at2"/>
<dbReference type="PhylomeDB" id="P96670"/>
<dbReference type="BioCyc" id="BSUB:BSU05250-MONOMER"/>
<dbReference type="Proteomes" id="UP000001570">
    <property type="component" value="Chromosome"/>
</dbReference>
<dbReference type="CDD" id="cd03454">
    <property type="entry name" value="YdeM"/>
    <property type="match status" value="1"/>
</dbReference>
<dbReference type="Gene3D" id="3.10.129.10">
    <property type="entry name" value="Hotdog Thioesterase"/>
    <property type="match status" value="1"/>
</dbReference>
<dbReference type="InterPro" id="IPR029069">
    <property type="entry name" value="HotDog_dom_sf"/>
</dbReference>
<dbReference type="InterPro" id="IPR002539">
    <property type="entry name" value="MaoC-like_dom"/>
</dbReference>
<dbReference type="InterPro" id="IPR052342">
    <property type="entry name" value="MCH/BMMD"/>
</dbReference>
<dbReference type="PANTHER" id="PTHR43664:SF1">
    <property type="entry name" value="BETA-METHYLMALYL-COA DEHYDRATASE"/>
    <property type="match status" value="1"/>
</dbReference>
<dbReference type="PANTHER" id="PTHR43664">
    <property type="entry name" value="MONOAMINE OXIDASE-RELATED"/>
    <property type="match status" value="1"/>
</dbReference>
<dbReference type="Pfam" id="PF01575">
    <property type="entry name" value="MaoC_dehydratas"/>
    <property type="match status" value="1"/>
</dbReference>
<dbReference type="SUPFAM" id="SSF54637">
    <property type="entry name" value="Thioesterase/thiol ester dehydrase-isomerase"/>
    <property type="match status" value="1"/>
</dbReference>
<sequence length="141" mass="16158">MKLDEFTIGQVFKTKSLKVSKDDIMRFAGEFDPQYMHVDEEKASKGRFNGIIASGIQTLAISFKLWIEEGFYGDDIIAGTEMNHMTFIKPVYPDDELFTIVEVLDKQPKRNELGILTVLLSTYNQKEVKVFEGELSVLIKR</sequence>
<reference key="1">
    <citation type="submission" date="1997-03" db="EMBL/GenBank/DDBJ databases">
        <title>A 148 kbp sequence of the region between 35 and 47 degree of the Bacillus subtilis genome.</title>
        <authorList>
            <person name="Kasahara Y."/>
            <person name="Nakai S."/>
            <person name="Lee S."/>
            <person name="Sadaie Y."/>
            <person name="Ogasawara N."/>
        </authorList>
    </citation>
    <scope>NUCLEOTIDE SEQUENCE [GENOMIC DNA]</scope>
    <source>
        <strain>168</strain>
    </source>
</reference>
<reference key="2">
    <citation type="journal article" date="1997" name="Nature">
        <title>The complete genome sequence of the Gram-positive bacterium Bacillus subtilis.</title>
        <authorList>
            <person name="Kunst F."/>
            <person name="Ogasawara N."/>
            <person name="Moszer I."/>
            <person name="Albertini A.M."/>
            <person name="Alloni G."/>
            <person name="Azevedo V."/>
            <person name="Bertero M.G."/>
            <person name="Bessieres P."/>
            <person name="Bolotin A."/>
            <person name="Borchert S."/>
            <person name="Borriss R."/>
            <person name="Boursier L."/>
            <person name="Brans A."/>
            <person name="Braun M."/>
            <person name="Brignell S.C."/>
            <person name="Bron S."/>
            <person name="Brouillet S."/>
            <person name="Bruschi C.V."/>
            <person name="Caldwell B."/>
            <person name="Capuano V."/>
            <person name="Carter N.M."/>
            <person name="Choi S.-K."/>
            <person name="Codani J.-J."/>
            <person name="Connerton I.F."/>
            <person name="Cummings N.J."/>
            <person name="Daniel R.A."/>
            <person name="Denizot F."/>
            <person name="Devine K.M."/>
            <person name="Duesterhoeft A."/>
            <person name="Ehrlich S.D."/>
            <person name="Emmerson P.T."/>
            <person name="Entian K.-D."/>
            <person name="Errington J."/>
            <person name="Fabret C."/>
            <person name="Ferrari E."/>
            <person name="Foulger D."/>
            <person name="Fritz C."/>
            <person name="Fujita M."/>
            <person name="Fujita Y."/>
            <person name="Fuma S."/>
            <person name="Galizzi A."/>
            <person name="Galleron N."/>
            <person name="Ghim S.-Y."/>
            <person name="Glaser P."/>
            <person name="Goffeau A."/>
            <person name="Golightly E.J."/>
            <person name="Grandi G."/>
            <person name="Guiseppi G."/>
            <person name="Guy B.J."/>
            <person name="Haga K."/>
            <person name="Haiech J."/>
            <person name="Harwood C.R."/>
            <person name="Henaut A."/>
            <person name="Hilbert H."/>
            <person name="Holsappel S."/>
            <person name="Hosono S."/>
            <person name="Hullo M.-F."/>
            <person name="Itaya M."/>
            <person name="Jones L.-M."/>
            <person name="Joris B."/>
            <person name="Karamata D."/>
            <person name="Kasahara Y."/>
            <person name="Klaerr-Blanchard M."/>
            <person name="Klein C."/>
            <person name="Kobayashi Y."/>
            <person name="Koetter P."/>
            <person name="Koningstein G."/>
            <person name="Krogh S."/>
            <person name="Kumano M."/>
            <person name="Kurita K."/>
            <person name="Lapidus A."/>
            <person name="Lardinois S."/>
            <person name="Lauber J."/>
            <person name="Lazarevic V."/>
            <person name="Lee S.-M."/>
            <person name="Levine A."/>
            <person name="Liu H."/>
            <person name="Masuda S."/>
            <person name="Mauel C."/>
            <person name="Medigue C."/>
            <person name="Medina N."/>
            <person name="Mellado R.P."/>
            <person name="Mizuno M."/>
            <person name="Moestl D."/>
            <person name="Nakai S."/>
            <person name="Noback M."/>
            <person name="Noone D."/>
            <person name="O'Reilly M."/>
            <person name="Ogawa K."/>
            <person name="Ogiwara A."/>
            <person name="Oudega B."/>
            <person name="Park S.-H."/>
            <person name="Parro V."/>
            <person name="Pohl T.M."/>
            <person name="Portetelle D."/>
            <person name="Porwollik S."/>
            <person name="Prescott A.M."/>
            <person name="Presecan E."/>
            <person name="Pujic P."/>
            <person name="Purnelle B."/>
            <person name="Rapoport G."/>
            <person name="Rey M."/>
            <person name="Reynolds S."/>
            <person name="Rieger M."/>
            <person name="Rivolta C."/>
            <person name="Rocha E."/>
            <person name="Roche B."/>
            <person name="Rose M."/>
            <person name="Sadaie Y."/>
            <person name="Sato T."/>
            <person name="Scanlan E."/>
            <person name="Schleich S."/>
            <person name="Schroeter R."/>
            <person name="Scoffone F."/>
            <person name="Sekiguchi J."/>
            <person name="Sekowska A."/>
            <person name="Seror S.J."/>
            <person name="Serror P."/>
            <person name="Shin B.-S."/>
            <person name="Soldo B."/>
            <person name="Sorokin A."/>
            <person name="Tacconi E."/>
            <person name="Takagi T."/>
            <person name="Takahashi H."/>
            <person name="Takemaru K."/>
            <person name="Takeuchi M."/>
            <person name="Tamakoshi A."/>
            <person name="Tanaka T."/>
            <person name="Terpstra P."/>
            <person name="Tognoni A."/>
            <person name="Tosato V."/>
            <person name="Uchiyama S."/>
            <person name="Vandenbol M."/>
            <person name="Vannier F."/>
            <person name="Vassarotti A."/>
            <person name="Viari A."/>
            <person name="Wambutt R."/>
            <person name="Wedler E."/>
            <person name="Wedler H."/>
            <person name="Weitzenegger T."/>
            <person name="Winters P."/>
            <person name="Wipat A."/>
            <person name="Yamamoto H."/>
            <person name="Yamane K."/>
            <person name="Yasumoto K."/>
            <person name="Yata K."/>
            <person name="Yoshida K."/>
            <person name="Yoshikawa H.-F."/>
            <person name="Zumstein E."/>
            <person name="Yoshikawa H."/>
            <person name="Danchin A."/>
        </authorList>
    </citation>
    <scope>NUCLEOTIDE SEQUENCE [LARGE SCALE GENOMIC DNA]</scope>
    <source>
        <strain>168</strain>
    </source>
</reference>
<accession>P96670</accession>
<accession>Q797H8</accession>
<protein>
    <recommendedName>
        <fullName>Uncharacterized protein YdeM</fullName>
    </recommendedName>
</protein>
<keyword id="KW-1185">Reference proteome</keyword>
<name>YDEM_BACSU</name>